<feature type="chain" id="PRO_0000147793" description="Phosphoglucomutase">
    <location>
        <begin position="1"/>
        <end position="555"/>
    </location>
</feature>
<feature type="active site" description="Phosphoserine intermediate" evidence="1">
    <location>
        <position position="114"/>
    </location>
</feature>
<feature type="binding site" evidence="1">
    <location>
        <position position="22"/>
    </location>
    <ligand>
        <name>alpha-D-glucose 1,6-bisphosphate</name>
        <dbReference type="ChEBI" id="CHEBI:58392"/>
    </ligand>
</feature>
<feature type="binding site" evidence="1">
    <location>
        <position position="114"/>
    </location>
    <ligand>
        <name>alpha-D-glucose 1,6-bisphosphate</name>
        <dbReference type="ChEBI" id="CHEBI:58392"/>
    </ligand>
</feature>
<feature type="binding site" description="via phosphate group" evidence="1">
    <location>
        <position position="114"/>
    </location>
    <ligand>
        <name>Mg(2+)</name>
        <dbReference type="ChEBI" id="CHEBI:18420"/>
    </ligand>
</feature>
<feature type="binding site" evidence="1">
    <location>
        <position position="279"/>
    </location>
    <ligand>
        <name>Mg(2+)</name>
        <dbReference type="ChEBI" id="CHEBI:18420"/>
    </ligand>
</feature>
<feature type="binding site" evidence="1">
    <location>
        <position position="281"/>
    </location>
    <ligand>
        <name>Mg(2+)</name>
        <dbReference type="ChEBI" id="CHEBI:18420"/>
    </ligand>
</feature>
<feature type="binding site" evidence="1">
    <location>
        <position position="283"/>
    </location>
    <ligand>
        <name>alpha-D-glucose 1,6-bisphosphate</name>
        <dbReference type="ChEBI" id="CHEBI:58392"/>
    </ligand>
</feature>
<feature type="binding site" evidence="1">
    <location>
        <position position="283"/>
    </location>
    <ligand>
        <name>Mg(2+)</name>
        <dbReference type="ChEBI" id="CHEBI:18420"/>
    </ligand>
</feature>
<feature type="binding site" evidence="1">
    <location>
        <position position="284"/>
    </location>
    <ligand>
        <name>alpha-D-glucose 1,6-bisphosphate</name>
        <dbReference type="ChEBI" id="CHEBI:58392"/>
    </ligand>
</feature>
<feature type="binding site" evidence="1">
    <location>
        <position position="347"/>
    </location>
    <ligand>
        <name>alpha-D-glucose 1,6-bisphosphate</name>
        <dbReference type="ChEBI" id="CHEBI:58392"/>
    </ligand>
</feature>
<feature type="binding site" evidence="1">
    <location>
        <position position="366"/>
    </location>
    <ligand>
        <name>alpha-D-glucose 1,6-bisphosphate</name>
        <dbReference type="ChEBI" id="CHEBI:58392"/>
    </ligand>
</feature>
<feature type="binding site" evidence="1">
    <location>
        <position position="368"/>
    </location>
    <ligand>
        <name>alpha-D-glucose 1,6-bisphosphate</name>
        <dbReference type="ChEBI" id="CHEBI:58392"/>
    </ligand>
</feature>
<feature type="binding site" evidence="1">
    <location>
        <position position="379"/>
    </location>
    <ligand>
        <name>alpha-D-glucose 1,6-bisphosphate</name>
        <dbReference type="ChEBI" id="CHEBI:58392"/>
    </ligand>
</feature>
<feature type="modified residue" description="Phosphoserine" evidence="2">
    <location>
        <position position="114"/>
    </location>
</feature>
<reference key="1">
    <citation type="submission" date="1999-09" db="EMBL/GenBank/DDBJ databases">
        <title>Molecular cloning and characterization of phosphoglucomutase from Aspergillus oryzae.</title>
        <authorList>
            <person name="Nakajima K."/>
            <person name="Kunihiro S."/>
            <person name="Sano M."/>
            <person name="Eto S."/>
            <person name="Machida M."/>
        </authorList>
    </citation>
    <scope>NUCLEOTIDE SEQUENCE [MRNA]</scope>
    <source>
        <strain>ATCC 42149 / RIB 40</strain>
    </source>
</reference>
<reference key="2">
    <citation type="journal article" date="2005" name="Nature">
        <title>Genome sequencing and analysis of Aspergillus oryzae.</title>
        <authorList>
            <person name="Machida M."/>
            <person name="Asai K."/>
            <person name="Sano M."/>
            <person name="Tanaka T."/>
            <person name="Kumagai T."/>
            <person name="Terai G."/>
            <person name="Kusumoto K."/>
            <person name="Arima T."/>
            <person name="Akita O."/>
            <person name="Kashiwagi Y."/>
            <person name="Abe K."/>
            <person name="Gomi K."/>
            <person name="Horiuchi H."/>
            <person name="Kitamoto K."/>
            <person name="Kobayashi T."/>
            <person name="Takeuchi M."/>
            <person name="Denning D.W."/>
            <person name="Galagan J.E."/>
            <person name="Nierman W.C."/>
            <person name="Yu J."/>
            <person name="Archer D.B."/>
            <person name="Bennett J.W."/>
            <person name="Bhatnagar D."/>
            <person name="Cleveland T.E."/>
            <person name="Fedorova N.D."/>
            <person name="Gotoh O."/>
            <person name="Horikawa H."/>
            <person name="Hosoyama A."/>
            <person name="Ichinomiya M."/>
            <person name="Igarashi R."/>
            <person name="Iwashita K."/>
            <person name="Juvvadi P.R."/>
            <person name="Kato M."/>
            <person name="Kato Y."/>
            <person name="Kin T."/>
            <person name="Kokubun A."/>
            <person name="Maeda H."/>
            <person name="Maeyama N."/>
            <person name="Maruyama J."/>
            <person name="Nagasaki H."/>
            <person name="Nakajima T."/>
            <person name="Oda K."/>
            <person name="Okada K."/>
            <person name="Paulsen I."/>
            <person name="Sakamoto K."/>
            <person name="Sawano T."/>
            <person name="Takahashi M."/>
            <person name="Takase K."/>
            <person name="Terabayashi Y."/>
            <person name="Wortman J.R."/>
            <person name="Yamada O."/>
            <person name="Yamagata Y."/>
            <person name="Anazawa H."/>
            <person name="Hata Y."/>
            <person name="Koide Y."/>
            <person name="Komori T."/>
            <person name="Koyama Y."/>
            <person name="Minetoki T."/>
            <person name="Suharnan S."/>
            <person name="Tanaka A."/>
            <person name="Isono K."/>
            <person name="Kuhara S."/>
            <person name="Ogasawara N."/>
            <person name="Kikuchi H."/>
        </authorList>
    </citation>
    <scope>NUCLEOTIDE SEQUENCE [LARGE SCALE GENOMIC DNA]</scope>
    <source>
        <strain>ATCC 42149 / RIB 40</strain>
    </source>
</reference>
<name>PGM_ASPOR</name>
<comment type="function">
    <text evidence="2">Catalyzes the reversible isomerization of alpha-D-glucose 1-phosphate to alpha-D-glucose 6-phosphate (By similarity). The mechanism proceeds via the intermediate compound alpha-D-glucose 1,6-bisphosphate (By similarity). Key enzyme in hexose metabolism (By similarity). The reverse reaction is an essential step for biosynthesis because glucose 1-phosphate is the starting point for the synthesis of UDP-glucose, which acts as a precursor for the synthesis of oligosaccharides and trehalose (By similarity).</text>
</comment>
<comment type="catalytic activity">
    <reaction evidence="2">
        <text>alpha-D-glucose 1-phosphate = alpha-D-glucose 6-phosphate</text>
        <dbReference type="Rhea" id="RHEA:23536"/>
        <dbReference type="ChEBI" id="CHEBI:58225"/>
        <dbReference type="ChEBI" id="CHEBI:58601"/>
        <dbReference type="EC" id="5.4.2.2"/>
    </reaction>
</comment>
<comment type="catalytic activity">
    <reaction evidence="2">
        <text>O-phospho-L-seryl-[protein] + alpha-D-glucose 1-phosphate = alpha-D-glucose 1,6-bisphosphate + L-seryl-[protein]</text>
        <dbReference type="Rhea" id="RHEA:68748"/>
        <dbReference type="Rhea" id="RHEA-COMP:9863"/>
        <dbReference type="Rhea" id="RHEA-COMP:11604"/>
        <dbReference type="ChEBI" id="CHEBI:29999"/>
        <dbReference type="ChEBI" id="CHEBI:58392"/>
        <dbReference type="ChEBI" id="CHEBI:58601"/>
        <dbReference type="ChEBI" id="CHEBI:83421"/>
    </reaction>
</comment>
<comment type="catalytic activity">
    <reaction evidence="2">
        <text>alpha-D-glucose 1,6-bisphosphate + L-seryl-[protein] = O-phospho-L-seryl-[protein] + alpha-D-glucose 6-phosphate</text>
        <dbReference type="Rhea" id="RHEA:68752"/>
        <dbReference type="Rhea" id="RHEA-COMP:9863"/>
        <dbReference type="Rhea" id="RHEA-COMP:11604"/>
        <dbReference type="ChEBI" id="CHEBI:29999"/>
        <dbReference type="ChEBI" id="CHEBI:58225"/>
        <dbReference type="ChEBI" id="CHEBI:58392"/>
        <dbReference type="ChEBI" id="CHEBI:83421"/>
    </reaction>
</comment>
<comment type="cofactor">
    <cofactor evidence="1">
        <name>Mg(2+)</name>
        <dbReference type="ChEBI" id="CHEBI:18420"/>
    </cofactor>
    <text evidence="1">Binds 1 Mg(2+) ion per subunit.</text>
</comment>
<comment type="subunit">
    <text evidence="2">Monomer.</text>
</comment>
<comment type="subcellular location">
    <subcellularLocation>
        <location evidence="2">Cytoplasm</location>
    </subcellularLocation>
</comment>
<comment type="similarity">
    <text evidence="3">Belongs to the phosphohexose mutase family.</text>
</comment>
<dbReference type="EC" id="5.4.2.2" evidence="2"/>
<dbReference type="EMBL" id="AB032275">
    <property type="protein sequence ID" value="BAB12235.1"/>
    <property type="molecule type" value="mRNA"/>
</dbReference>
<dbReference type="EMBL" id="BA000050">
    <property type="protein sequence ID" value="BAE57887.1"/>
    <property type="molecule type" value="Genomic_DNA"/>
</dbReference>
<dbReference type="RefSeq" id="XP_001819889.1">
    <property type="nucleotide sequence ID" value="XM_001819837.2"/>
</dbReference>
<dbReference type="SMR" id="P57749"/>
<dbReference type="STRING" id="510516.P57749"/>
<dbReference type="EnsemblFungi" id="BAE57887">
    <property type="protein sequence ID" value="BAE57887"/>
    <property type="gene ID" value="AO090003000746"/>
</dbReference>
<dbReference type="GeneID" id="5991872"/>
<dbReference type="KEGG" id="aor:AO090003000746"/>
<dbReference type="VEuPathDB" id="FungiDB:AO090003000746"/>
<dbReference type="HOGENOM" id="CLU_009330_0_1_1"/>
<dbReference type="OMA" id="WIQDRAN"/>
<dbReference type="OrthoDB" id="12470at5052"/>
<dbReference type="Proteomes" id="UP000006564">
    <property type="component" value="Chromosome 2"/>
</dbReference>
<dbReference type="GO" id="GO:0005829">
    <property type="term" value="C:cytosol"/>
    <property type="evidence" value="ECO:0007669"/>
    <property type="project" value="TreeGrafter"/>
</dbReference>
<dbReference type="GO" id="GO:0000287">
    <property type="term" value="F:magnesium ion binding"/>
    <property type="evidence" value="ECO:0007669"/>
    <property type="project" value="InterPro"/>
</dbReference>
<dbReference type="GO" id="GO:0004614">
    <property type="term" value="F:phosphoglucomutase activity"/>
    <property type="evidence" value="ECO:0007669"/>
    <property type="project" value="UniProtKB-EC"/>
</dbReference>
<dbReference type="GO" id="GO:0006006">
    <property type="term" value="P:glucose metabolic process"/>
    <property type="evidence" value="ECO:0007669"/>
    <property type="project" value="UniProtKB-KW"/>
</dbReference>
<dbReference type="CDD" id="cd03085">
    <property type="entry name" value="PGM1"/>
    <property type="match status" value="1"/>
</dbReference>
<dbReference type="FunFam" id="3.30.310.50:FF:000002">
    <property type="entry name" value="Phosphoglucomutase 5"/>
    <property type="match status" value="1"/>
</dbReference>
<dbReference type="FunFam" id="3.40.120.10:FF:000004">
    <property type="entry name" value="Phosphoglucomutase 5"/>
    <property type="match status" value="1"/>
</dbReference>
<dbReference type="FunFam" id="3.40.120.10:FF:000005">
    <property type="entry name" value="Phosphoglucomutase 5"/>
    <property type="match status" value="1"/>
</dbReference>
<dbReference type="FunFam" id="3.40.120.10:FF:000006">
    <property type="entry name" value="Phosphoglucomutase PgmA"/>
    <property type="match status" value="1"/>
</dbReference>
<dbReference type="Gene3D" id="3.40.120.10">
    <property type="entry name" value="Alpha-D-Glucose-1,6-Bisphosphate, subunit A, domain 3"/>
    <property type="match status" value="3"/>
</dbReference>
<dbReference type="Gene3D" id="3.30.310.50">
    <property type="entry name" value="Alpha-D-phosphohexomutase, C-terminal domain"/>
    <property type="match status" value="1"/>
</dbReference>
<dbReference type="InterPro" id="IPR005844">
    <property type="entry name" value="A-D-PHexomutase_a/b/a-I"/>
</dbReference>
<dbReference type="InterPro" id="IPR016055">
    <property type="entry name" value="A-D-PHexomutase_a/b/a-I/II/III"/>
</dbReference>
<dbReference type="InterPro" id="IPR005845">
    <property type="entry name" value="A-D-PHexomutase_a/b/a-II"/>
</dbReference>
<dbReference type="InterPro" id="IPR005846">
    <property type="entry name" value="A-D-PHexomutase_a/b/a-III"/>
</dbReference>
<dbReference type="InterPro" id="IPR036900">
    <property type="entry name" value="A-D-PHexomutase_C_sf"/>
</dbReference>
<dbReference type="InterPro" id="IPR016066">
    <property type="entry name" value="A-D-PHexomutase_CS"/>
</dbReference>
<dbReference type="InterPro" id="IPR005841">
    <property type="entry name" value="Alpha-D-phosphohexomutase_SF"/>
</dbReference>
<dbReference type="InterPro" id="IPR045244">
    <property type="entry name" value="PGM"/>
</dbReference>
<dbReference type="NCBIfam" id="NF005737">
    <property type="entry name" value="PRK07564.1-1"/>
    <property type="match status" value="1"/>
</dbReference>
<dbReference type="PANTHER" id="PTHR22573:SF2">
    <property type="entry name" value="PHOSPHOGLUCOMUTASE"/>
    <property type="match status" value="1"/>
</dbReference>
<dbReference type="PANTHER" id="PTHR22573">
    <property type="entry name" value="PHOSPHOHEXOMUTASE FAMILY MEMBER"/>
    <property type="match status" value="1"/>
</dbReference>
<dbReference type="Pfam" id="PF24947">
    <property type="entry name" value="PGM1_C_vert_fung"/>
    <property type="match status" value="1"/>
</dbReference>
<dbReference type="Pfam" id="PF02878">
    <property type="entry name" value="PGM_PMM_I"/>
    <property type="match status" value="1"/>
</dbReference>
<dbReference type="Pfam" id="PF02879">
    <property type="entry name" value="PGM_PMM_II"/>
    <property type="match status" value="1"/>
</dbReference>
<dbReference type="Pfam" id="PF02880">
    <property type="entry name" value="PGM_PMM_III"/>
    <property type="match status" value="1"/>
</dbReference>
<dbReference type="PRINTS" id="PR00509">
    <property type="entry name" value="PGMPMM"/>
</dbReference>
<dbReference type="SUPFAM" id="SSF55957">
    <property type="entry name" value="Phosphoglucomutase, C-terminal domain"/>
    <property type="match status" value="1"/>
</dbReference>
<dbReference type="SUPFAM" id="SSF53738">
    <property type="entry name" value="Phosphoglucomutase, first 3 domains"/>
    <property type="match status" value="3"/>
</dbReference>
<dbReference type="PROSITE" id="PS00710">
    <property type="entry name" value="PGM_PMM"/>
    <property type="match status" value="1"/>
</dbReference>
<sequence>MSIQTVSFQSFTDQKPGTSGLRKKVKVFQQPNYSESFITSILLSIPEGAKDAFLVIGGDGRYYNPEAIQKIAKISAAYGVKKLLVGQNGILSTPAASNLIRVRKATGGILLTASHNPGGPNADFGIKYNLSNGAPAPETVTNKIYETSKTLTSYNYAEIPELDLSSIGSKTYGPLEVEVVHSTSDYVKMMKEIFDFDLIKEFLNTHKDFKVLFDGMHGVTGPYGVDIFVNELGLPSSSTMNCVPSPDFNGGHPDPNLVYAHELVEAVDKNGIHFGAASDGDGDRNMIYGANTFVSPGDSLAIISHHAKLIPYFQKQGVYGLARSMPTSGAVDLVAKAQGLQSYEVPTGWKFFCNLFDNKKISICGEESFGTGSNHIREKDGLWAIVAWLNIIAGVAKEKPDQTPSIASIQNDFWQAYGRTFFTRYDYENVDSDGANKVIAILSDKVANKDSFVGSTVSGRKVTDVGNFSYTDLDGSVSKNQGLYAKFDDGSRIIVRLSGTGSSGATIRLYIEKYESDKSKFGLTASEYLKDNVALALSLLNFKEFIGREEPDVRT</sequence>
<organism>
    <name type="scientific">Aspergillus oryzae (strain ATCC 42149 / RIB 40)</name>
    <name type="common">Yellow koji mold</name>
    <dbReference type="NCBI Taxonomy" id="510516"/>
    <lineage>
        <taxon>Eukaryota</taxon>
        <taxon>Fungi</taxon>
        <taxon>Dikarya</taxon>
        <taxon>Ascomycota</taxon>
        <taxon>Pezizomycotina</taxon>
        <taxon>Eurotiomycetes</taxon>
        <taxon>Eurotiomycetidae</taxon>
        <taxon>Eurotiales</taxon>
        <taxon>Aspergillaceae</taxon>
        <taxon>Aspergillus</taxon>
        <taxon>Aspergillus subgen. Circumdati</taxon>
    </lineage>
</organism>
<proteinExistence type="evidence at transcript level"/>
<keyword id="KW-0119">Carbohydrate metabolism</keyword>
<keyword id="KW-0963">Cytoplasm</keyword>
<keyword id="KW-0313">Glucose metabolism</keyword>
<keyword id="KW-0413">Isomerase</keyword>
<keyword id="KW-0460">Magnesium</keyword>
<keyword id="KW-0479">Metal-binding</keyword>
<keyword id="KW-0597">Phosphoprotein</keyword>
<keyword id="KW-1185">Reference proteome</keyword>
<protein>
    <recommendedName>
        <fullName evidence="2">Phosphoglucomutase</fullName>
        <shortName evidence="2">PGM</shortName>
        <ecNumber evidence="2">5.4.2.2</ecNumber>
    </recommendedName>
    <alternativeName>
        <fullName>Glucose phosphomutase</fullName>
    </alternativeName>
</protein>
<evidence type="ECO:0000250" key="1">
    <source>
        <dbReference type="UniProtKB" id="P00949"/>
    </source>
</evidence>
<evidence type="ECO:0000250" key="2">
    <source>
        <dbReference type="UniProtKB" id="P37012"/>
    </source>
</evidence>
<evidence type="ECO:0000305" key="3"/>
<accession>P57749</accession>
<accession>Q2UKM8</accession>
<gene>
    <name type="primary">pgmA</name>
    <name type="ORF">AO090003000746</name>
</gene>